<dbReference type="EMBL" id="Z68203">
    <property type="protein sequence ID" value="CAA92401.1"/>
    <property type="molecule type" value="Genomic_DNA"/>
</dbReference>
<dbReference type="EMBL" id="U00090">
    <property type="protein sequence ID" value="AAB91872.1"/>
    <property type="molecule type" value="Genomic_DNA"/>
</dbReference>
<dbReference type="RefSeq" id="NP_444085.1">
    <property type="nucleotide sequence ID" value="NC_000914.2"/>
</dbReference>
<dbReference type="RefSeq" id="WP_010875178.1">
    <property type="nucleotide sequence ID" value="NC_000914.2"/>
</dbReference>
<dbReference type="SMR" id="Q53194"/>
<dbReference type="KEGG" id="rhi:NGR_a01400"/>
<dbReference type="PATRIC" id="fig|394.7.peg.126"/>
<dbReference type="eggNOG" id="COG4608">
    <property type="taxonomic scope" value="Bacteria"/>
</dbReference>
<dbReference type="HOGENOM" id="CLU_000604_1_23_5"/>
<dbReference type="OrthoDB" id="9815712at2"/>
<dbReference type="Proteomes" id="UP000001054">
    <property type="component" value="Plasmid pNGR234a"/>
</dbReference>
<dbReference type="GO" id="GO:0005886">
    <property type="term" value="C:plasma membrane"/>
    <property type="evidence" value="ECO:0007669"/>
    <property type="project" value="UniProtKB-SubCell"/>
</dbReference>
<dbReference type="GO" id="GO:0005524">
    <property type="term" value="F:ATP binding"/>
    <property type="evidence" value="ECO:0007669"/>
    <property type="project" value="UniProtKB-KW"/>
</dbReference>
<dbReference type="GO" id="GO:0016887">
    <property type="term" value="F:ATP hydrolysis activity"/>
    <property type="evidence" value="ECO:0007669"/>
    <property type="project" value="InterPro"/>
</dbReference>
<dbReference type="GO" id="GO:0006865">
    <property type="term" value="P:amino acid transport"/>
    <property type="evidence" value="ECO:0007669"/>
    <property type="project" value="UniProtKB-KW"/>
</dbReference>
<dbReference type="GO" id="GO:0015833">
    <property type="term" value="P:peptide transport"/>
    <property type="evidence" value="ECO:0007669"/>
    <property type="project" value="InterPro"/>
</dbReference>
<dbReference type="GO" id="GO:0055085">
    <property type="term" value="P:transmembrane transport"/>
    <property type="evidence" value="ECO:0007669"/>
    <property type="project" value="UniProtKB-ARBA"/>
</dbReference>
<dbReference type="CDD" id="cd03257">
    <property type="entry name" value="ABC_NikE_OppD_transporters"/>
    <property type="match status" value="1"/>
</dbReference>
<dbReference type="FunFam" id="3.40.50.300:FF:000016">
    <property type="entry name" value="Oligopeptide ABC transporter ATP-binding component"/>
    <property type="match status" value="1"/>
</dbReference>
<dbReference type="Gene3D" id="3.40.50.300">
    <property type="entry name" value="P-loop containing nucleotide triphosphate hydrolases"/>
    <property type="match status" value="1"/>
</dbReference>
<dbReference type="InterPro" id="IPR003593">
    <property type="entry name" value="AAA+_ATPase"/>
</dbReference>
<dbReference type="InterPro" id="IPR050319">
    <property type="entry name" value="ABC_transp_ATP-bind"/>
</dbReference>
<dbReference type="InterPro" id="IPR003439">
    <property type="entry name" value="ABC_transporter-like_ATP-bd"/>
</dbReference>
<dbReference type="InterPro" id="IPR017871">
    <property type="entry name" value="ABC_transporter-like_CS"/>
</dbReference>
<dbReference type="InterPro" id="IPR013563">
    <property type="entry name" value="Oligopep_ABC_C"/>
</dbReference>
<dbReference type="InterPro" id="IPR027417">
    <property type="entry name" value="P-loop_NTPase"/>
</dbReference>
<dbReference type="NCBIfam" id="TIGR01727">
    <property type="entry name" value="oligo_HPY"/>
    <property type="match status" value="1"/>
</dbReference>
<dbReference type="NCBIfam" id="NF008453">
    <property type="entry name" value="PRK11308.1"/>
    <property type="match status" value="1"/>
</dbReference>
<dbReference type="PANTHER" id="PTHR43776:SF7">
    <property type="entry name" value="D,D-DIPEPTIDE TRANSPORT ATP-BINDING PROTEIN DDPF-RELATED"/>
    <property type="match status" value="1"/>
</dbReference>
<dbReference type="PANTHER" id="PTHR43776">
    <property type="entry name" value="TRANSPORT ATP-BINDING PROTEIN"/>
    <property type="match status" value="1"/>
</dbReference>
<dbReference type="Pfam" id="PF00005">
    <property type="entry name" value="ABC_tran"/>
    <property type="match status" value="1"/>
</dbReference>
<dbReference type="Pfam" id="PF08352">
    <property type="entry name" value="oligo_HPY"/>
    <property type="match status" value="1"/>
</dbReference>
<dbReference type="SMART" id="SM00382">
    <property type="entry name" value="AAA"/>
    <property type="match status" value="1"/>
</dbReference>
<dbReference type="SUPFAM" id="SSF52540">
    <property type="entry name" value="P-loop containing nucleoside triphosphate hydrolases"/>
    <property type="match status" value="1"/>
</dbReference>
<dbReference type="PROSITE" id="PS00211">
    <property type="entry name" value="ABC_TRANSPORTER_1"/>
    <property type="match status" value="1"/>
</dbReference>
<dbReference type="PROSITE" id="PS50893">
    <property type="entry name" value="ABC_TRANSPORTER_2"/>
    <property type="match status" value="1"/>
</dbReference>
<reference key="1">
    <citation type="journal article" date="1996" name="Genome Res.">
        <title>Sequencing the 500-kb GC-rich symbiotic replicon of Rhizobium sp. NGR234 using dye terminators and a thermostable 'sequenase': a beginning.</title>
        <authorList>
            <person name="Freiberg C."/>
            <person name="Perret X."/>
            <person name="Broughton W.J."/>
            <person name="Rosenthal A."/>
        </authorList>
    </citation>
    <scope>NUCLEOTIDE SEQUENCE [GENOMIC DNA]</scope>
</reference>
<reference key="2">
    <citation type="journal article" date="1997" name="Nature">
        <title>Molecular basis of symbiosis between Rhizobium and legumes.</title>
        <authorList>
            <person name="Freiberg C.A."/>
            <person name="Fellay R."/>
            <person name="Bairoch A."/>
            <person name="Broughton W.J."/>
            <person name="Rosenthal A."/>
            <person name="Perret X."/>
        </authorList>
    </citation>
    <scope>NUCLEOTIDE SEQUENCE [LARGE SCALE GENOMIC DNA]</scope>
    <source>
        <strain>NBRC 101917 / NGR234</strain>
    </source>
</reference>
<reference key="3">
    <citation type="journal article" date="2009" name="Appl. Environ. Microbiol.">
        <title>Rhizobium sp. strain NGR234 possesses a remarkable number of secretion systems.</title>
        <authorList>
            <person name="Schmeisser C."/>
            <person name="Liesegang H."/>
            <person name="Krysciak D."/>
            <person name="Bakkou N."/>
            <person name="Le Quere A."/>
            <person name="Wollherr A."/>
            <person name="Heinemeyer I."/>
            <person name="Morgenstern B."/>
            <person name="Pommerening-Roeser A."/>
            <person name="Flores M."/>
            <person name="Palacios R."/>
            <person name="Brenner S."/>
            <person name="Gottschalk G."/>
            <person name="Schmitz R.A."/>
            <person name="Broughton W.J."/>
            <person name="Perret X."/>
            <person name="Strittmatter A.W."/>
            <person name="Streit W.R."/>
        </authorList>
    </citation>
    <scope>NUCLEOTIDE SEQUENCE [LARGE SCALE GENOMIC DNA]</scope>
    <source>
        <strain>NBRC 101917 / NGR234</strain>
    </source>
</reference>
<sequence>MSDALLKVESLTKHYPIEAGWFKTNVPVVRAVEDVSFTVQAGETLCVVGESGCGKSTLARLLMRLIDPTSGRVLVEGTDIAGLRKNELRAWRRRMQMVFQDPYSSLNPRLTAGQIITEPVENFECLSRRQRQELATDLLRKVGMSPEMASRYPSEMSGGQRQRLGIARALALKPSLIIADEAVSALDVSVQAQILNLLMDLQQETGIALIFISHDLAVVEHIGHRVAVMYLGRIVELSPRDALFAKPVHPYTEALIAAAPVPDPARARLEVPLEGEVPSPVNPPSGCAFHPRCPLAVDRCRAEVPPLVPMPDGRAVACHVRAPAAAAHISPSALASLALPKTVQPGGTILARR</sequence>
<geneLocation type="plasmid">
    <name>sym pNGR234a</name>
</geneLocation>
<feature type="chain" id="PRO_0000093276" description="Probable peptide ABC transporter ATP-binding protein y4tS">
    <location>
        <begin position="1"/>
        <end position="353"/>
    </location>
</feature>
<feature type="domain" description="ABC transporter" evidence="2">
    <location>
        <begin position="6"/>
        <end position="256"/>
    </location>
</feature>
<feature type="binding site" evidence="2">
    <location>
        <begin position="49"/>
        <end position="56"/>
    </location>
    <ligand>
        <name>ATP</name>
        <dbReference type="ChEBI" id="CHEBI:30616"/>
    </ligand>
</feature>
<keyword id="KW-0029">Amino-acid transport</keyword>
<keyword id="KW-0067">ATP-binding</keyword>
<keyword id="KW-0997">Cell inner membrane</keyword>
<keyword id="KW-1003">Cell membrane</keyword>
<keyword id="KW-0472">Membrane</keyword>
<keyword id="KW-0547">Nucleotide-binding</keyword>
<keyword id="KW-0614">Plasmid</keyword>
<keyword id="KW-1185">Reference proteome</keyword>
<keyword id="KW-0813">Transport</keyword>
<accession>Q53194</accession>
<organism>
    <name type="scientific">Sinorhizobium fredii (strain NBRC 101917 / NGR234)</name>
    <dbReference type="NCBI Taxonomy" id="394"/>
    <lineage>
        <taxon>Bacteria</taxon>
        <taxon>Pseudomonadati</taxon>
        <taxon>Pseudomonadota</taxon>
        <taxon>Alphaproteobacteria</taxon>
        <taxon>Hyphomicrobiales</taxon>
        <taxon>Rhizobiaceae</taxon>
        <taxon>Sinorhizobium/Ensifer group</taxon>
        <taxon>Sinorhizobium</taxon>
    </lineage>
</organism>
<name>Y4TS_SINFN</name>
<evidence type="ECO:0000250" key="1"/>
<evidence type="ECO:0000255" key="2">
    <source>
        <dbReference type="PROSITE-ProRule" id="PRU00434"/>
    </source>
</evidence>
<evidence type="ECO:0000305" key="3"/>
<gene>
    <name type="ordered locus">NGR_a01400</name>
    <name type="ORF">y4tS</name>
</gene>
<protein>
    <recommendedName>
        <fullName>Probable peptide ABC transporter ATP-binding protein y4tS</fullName>
    </recommendedName>
</protein>
<comment type="function">
    <text>Probably part of a binding-protein-dependent transport system y4tOPQRS for a peptide. Probably responsible for energy coupling to the transport system.</text>
</comment>
<comment type="subcellular location">
    <subcellularLocation>
        <location evidence="1">Cell inner membrane</location>
        <topology evidence="1">Peripheral membrane protein</topology>
    </subcellularLocation>
</comment>
<comment type="similarity">
    <text evidence="3">Belongs to the ABC transporter superfamily.</text>
</comment>
<proteinExistence type="inferred from homology"/>